<protein>
    <recommendedName>
        <fullName evidence="1">Formate-dependent phosphoribosylglycinamide formyltransferase</fullName>
        <ecNumber evidence="1">6.3.1.21</ecNumber>
    </recommendedName>
    <alternativeName>
        <fullName evidence="1">5'-phosphoribosylglycinamide transformylase 2</fullName>
    </alternativeName>
    <alternativeName>
        <fullName evidence="1">Formate-dependent GAR transformylase</fullName>
    </alternativeName>
    <alternativeName>
        <fullName evidence="1">GAR transformylase 2</fullName>
        <shortName evidence="1">GART 2</shortName>
    </alternativeName>
    <alternativeName>
        <fullName evidence="1">Non-folate glycinamide ribonucleotide transformylase</fullName>
    </alternativeName>
    <alternativeName>
        <fullName evidence="1">Phosphoribosylglycinamide formyltransferase 2</fullName>
    </alternativeName>
</protein>
<evidence type="ECO:0000255" key="1">
    <source>
        <dbReference type="HAMAP-Rule" id="MF_01643"/>
    </source>
</evidence>
<sequence>MFGTATRESATRVLLLGSGELGKEVAIECQRLGLEVIACDRYPDAPAMQVAHRSYVFDMLDASELEKVIAAEQPAFVVPEIEAIATDKLVELEEQGLNVVPSAKATKLTMNREGIRRLAAEELGLTTSPYRFADNYQQFVEAVEAVSIPCVVKPVMSSSGKGQSVIKSPADIEKAWQYAQEGGRTGAGRVIVEGFIDFDYEITLLTVRAVDGVHFCAPIGHRQEDGDYRESWQPQQMSENAIKAAEYTAEQVVNALGGYGIFGVELFVKGDKVIFNEVSPRPHDTGLVTLISQEMSEFALHVRAFTGMPVNKIVQYGPSASAVILGNGQSENLRFDGMSDALEQPQTQLRLFGKPDINGRRRLGVVLTRRSSTEKAVDAAIESAKKIKIIY</sequence>
<dbReference type="EC" id="6.3.1.21" evidence="1"/>
<dbReference type="EMBL" id="AE016795">
    <property type="protein sequence ID" value="AAO10752.1"/>
    <property type="molecule type" value="Genomic_DNA"/>
</dbReference>
<dbReference type="RefSeq" id="WP_011080245.1">
    <property type="nucleotide sequence ID" value="NC_004459.3"/>
</dbReference>
<dbReference type="SMR" id="Q8DA32"/>
<dbReference type="KEGG" id="vvu:VV1_2378"/>
<dbReference type="HOGENOM" id="CLU_011534_1_3_6"/>
<dbReference type="UniPathway" id="UPA00074">
    <property type="reaction ID" value="UER00127"/>
</dbReference>
<dbReference type="Proteomes" id="UP000002275">
    <property type="component" value="Chromosome 1"/>
</dbReference>
<dbReference type="GO" id="GO:0005829">
    <property type="term" value="C:cytosol"/>
    <property type="evidence" value="ECO:0007669"/>
    <property type="project" value="TreeGrafter"/>
</dbReference>
<dbReference type="GO" id="GO:0005524">
    <property type="term" value="F:ATP binding"/>
    <property type="evidence" value="ECO:0007669"/>
    <property type="project" value="UniProtKB-UniRule"/>
</dbReference>
<dbReference type="GO" id="GO:0000287">
    <property type="term" value="F:magnesium ion binding"/>
    <property type="evidence" value="ECO:0007669"/>
    <property type="project" value="InterPro"/>
</dbReference>
<dbReference type="GO" id="GO:0043815">
    <property type="term" value="F:phosphoribosylglycinamide formyltransferase 2 activity"/>
    <property type="evidence" value="ECO:0007669"/>
    <property type="project" value="UniProtKB-UniRule"/>
</dbReference>
<dbReference type="GO" id="GO:0004644">
    <property type="term" value="F:phosphoribosylglycinamide formyltransferase activity"/>
    <property type="evidence" value="ECO:0007669"/>
    <property type="project" value="InterPro"/>
</dbReference>
<dbReference type="GO" id="GO:0006189">
    <property type="term" value="P:'de novo' IMP biosynthetic process"/>
    <property type="evidence" value="ECO:0007669"/>
    <property type="project" value="UniProtKB-UniRule"/>
</dbReference>
<dbReference type="FunFam" id="3.30.1490.20:FF:000013">
    <property type="entry name" value="Formate-dependent phosphoribosylglycinamide formyltransferase"/>
    <property type="match status" value="1"/>
</dbReference>
<dbReference type="FunFam" id="3.30.470.20:FF:000027">
    <property type="entry name" value="Formate-dependent phosphoribosylglycinamide formyltransferase"/>
    <property type="match status" value="1"/>
</dbReference>
<dbReference type="FunFam" id="3.40.50.20:FF:000007">
    <property type="entry name" value="Formate-dependent phosphoribosylglycinamide formyltransferase"/>
    <property type="match status" value="1"/>
</dbReference>
<dbReference type="Gene3D" id="3.40.50.20">
    <property type="match status" value="1"/>
</dbReference>
<dbReference type="Gene3D" id="3.30.1490.20">
    <property type="entry name" value="ATP-grasp fold, A domain"/>
    <property type="match status" value="1"/>
</dbReference>
<dbReference type="Gene3D" id="3.30.470.20">
    <property type="entry name" value="ATP-grasp fold, B domain"/>
    <property type="match status" value="1"/>
</dbReference>
<dbReference type="HAMAP" id="MF_01643">
    <property type="entry name" value="PurT"/>
    <property type="match status" value="1"/>
</dbReference>
<dbReference type="InterPro" id="IPR011761">
    <property type="entry name" value="ATP-grasp"/>
</dbReference>
<dbReference type="InterPro" id="IPR003135">
    <property type="entry name" value="ATP-grasp_carboxylate-amine"/>
</dbReference>
<dbReference type="InterPro" id="IPR013815">
    <property type="entry name" value="ATP_grasp_subdomain_1"/>
</dbReference>
<dbReference type="InterPro" id="IPR016185">
    <property type="entry name" value="PreATP-grasp_dom_sf"/>
</dbReference>
<dbReference type="InterPro" id="IPR005862">
    <property type="entry name" value="PurT"/>
</dbReference>
<dbReference type="InterPro" id="IPR054350">
    <property type="entry name" value="PurT/PurK_preATP-grasp"/>
</dbReference>
<dbReference type="InterPro" id="IPR048740">
    <property type="entry name" value="PurT_C"/>
</dbReference>
<dbReference type="InterPro" id="IPR011054">
    <property type="entry name" value="Rudment_hybrid_motif"/>
</dbReference>
<dbReference type="NCBIfam" id="NF006766">
    <property type="entry name" value="PRK09288.1"/>
    <property type="match status" value="1"/>
</dbReference>
<dbReference type="NCBIfam" id="TIGR01142">
    <property type="entry name" value="purT"/>
    <property type="match status" value="1"/>
</dbReference>
<dbReference type="PANTHER" id="PTHR43055">
    <property type="entry name" value="FORMATE-DEPENDENT PHOSPHORIBOSYLGLYCINAMIDE FORMYLTRANSFERASE"/>
    <property type="match status" value="1"/>
</dbReference>
<dbReference type="PANTHER" id="PTHR43055:SF1">
    <property type="entry name" value="FORMATE-DEPENDENT PHOSPHORIBOSYLGLYCINAMIDE FORMYLTRANSFERASE"/>
    <property type="match status" value="1"/>
</dbReference>
<dbReference type="Pfam" id="PF02222">
    <property type="entry name" value="ATP-grasp"/>
    <property type="match status" value="1"/>
</dbReference>
<dbReference type="Pfam" id="PF21244">
    <property type="entry name" value="PurT_C"/>
    <property type="match status" value="1"/>
</dbReference>
<dbReference type="Pfam" id="PF22660">
    <property type="entry name" value="RS_preATP-grasp-like"/>
    <property type="match status" value="1"/>
</dbReference>
<dbReference type="SUPFAM" id="SSF56059">
    <property type="entry name" value="Glutathione synthetase ATP-binding domain-like"/>
    <property type="match status" value="1"/>
</dbReference>
<dbReference type="SUPFAM" id="SSF52440">
    <property type="entry name" value="PreATP-grasp domain"/>
    <property type="match status" value="1"/>
</dbReference>
<dbReference type="SUPFAM" id="SSF51246">
    <property type="entry name" value="Rudiment single hybrid motif"/>
    <property type="match status" value="1"/>
</dbReference>
<dbReference type="PROSITE" id="PS50975">
    <property type="entry name" value="ATP_GRASP"/>
    <property type="match status" value="1"/>
</dbReference>
<feature type="chain" id="PRO_0000319260" description="Formate-dependent phosphoribosylglycinamide formyltransferase">
    <location>
        <begin position="1"/>
        <end position="391"/>
    </location>
</feature>
<feature type="domain" description="ATP-grasp" evidence="1">
    <location>
        <begin position="117"/>
        <end position="306"/>
    </location>
</feature>
<feature type="binding site" evidence="1">
    <location>
        <begin position="20"/>
        <end position="21"/>
    </location>
    <ligand>
        <name>N(1)-(5-phospho-beta-D-ribosyl)glycinamide</name>
        <dbReference type="ChEBI" id="CHEBI:143788"/>
    </ligand>
</feature>
<feature type="binding site" evidence="1">
    <location>
        <position position="80"/>
    </location>
    <ligand>
        <name>N(1)-(5-phospho-beta-D-ribosyl)glycinamide</name>
        <dbReference type="ChEBI" id="CHEBI:143788"/>
    </ligand>
</feature>
<feature type="binding site" evidence="1">
    <location>
        <position position="112"/>
    </location>
    <ligand>
        <name>ATP</name>
        <dbReference type="ChEBI" id="CHEBI:30616"/>
    </ligand>
</feature>
<feature type="binding site" evidence="1">
    <location>
        <position position="153"/>
    </location>
    <ligand>
        <name>ATP</name>
        <dbReference type="ChEBI" id="CHEBI:30616"/>
    </ligand>
</feature>
<feature type="binding site" evidence="1">
    <location>
        <begin position="158"/>
        <end position="163"/>
    </location>
    <ligand>
        <name>ATP</name>
        <dbReference type="ChEBI" id="CHEBI:30616"/>
    </ligand>
</feature>
<feature type="binding site" evidence="1">
    <location>
        <begin position="193"/>
        <end position="196"/>
    </location>
    <ligand>
        <name>ATP</name>
        <dbReference type="ChEBI" id="CHEBI:30616"/>
    </ligand>
</feature>
<feature type="binding site" evidence="1">
    <location>
        <position position="201"/>
    </location>
    <ligand>
        <name>ATP</name>
        <dbReference type="ChEBI" id="CHEBI:30616"/>
    </ligand>
</feature>
<feature type="binding site" evidence="1">
    <location>
        <position position="265"/>
    </location>
    <ligand>
        <name>Mg(2+)</name>
        <dbReference type="ChEBI" id="CHEBI:18420"/>
    </ligand>
</feature>
<feature type="binding site" evidence="1">
    <location>
        <position position="277"/>
    </location>
    <ligand>
        <name>Mg(2+)</name>
        <dbReference type="ChEBI" id="CHEBI:18420"/>
    </ligand>
</feature>
<feature type="binding site" evidence="1">
    <location>
        <position position="284"/>
    </location>
    <ligand>
        <name>N(1)-(5-phospho-beta-D-ribosyl)glycinamide</name>
        <dbReference type="ChEBI" id="CHEBI:143788"/>
    </ligand>
</feature>
<feature type="binding site" evidence="1">
    <location>
        <position position="354"/>
    </location>
    <ligand>
        <name>N(1)-(5-phospho-beta-D-ribosyl)glycinamide</name>
        <dbReference type="ChEBI" id="CHEBI:143788"/>
    </ligand>
</feature>
<feature type="binding site" evidence="1">
    <location>
        <begin position="361"/>
        <end position="362"/>
    </location>
    <ligand>
        <name>N(1)-(5-phospho-beta-D-ribosyl)glycinamide</name>
        <dbReference type="ChEBI" id="CHEBI:143788"/>
    </ligand>
</feature>
<name>PURT_VIBVU</name>
<organism>
    <name type="scientific">Vibrio vulnificus (strain CMCP6)</name>
    <dbReference type="NCBI Taxonomy" id="216895"/>
    <lineage>
        <taxon>Bacteria</taxon>
        <taxon>Pseudomonadati</taxon>
        <taxon>Pseudomonadota</taxon>
        <taxon>Gammaproteobacteria</taxon>
        <taxon>Vibrionales</taxon>
        <taxon>Vibrionaceae</taxon>
        <taxon>Vibrio</taxon>
    </lineage>
</organism>
<accession>Q8DA32</accession>
<keyword id="KW-0067">ATP-binding</keyword>
<keyword id="KW-0436">Ligase</keyword>
<keyword id="KW-0460">Magnesium</keyword>
<keyword id="KW-0479">Metal-binding</keyword>
<keyword id="KW-0547">Nucleotide-binding</keyword>
<keyword id="KW-0658">Purine biosynthesis</keyword>
<reference key="1">
    <citation type="submission" date="2002-12" db="EMBL/GenBank/DDBJ databases">
        <title>Complete genome sequence of Vibrio vulnificus CMCP6.</title>
        <authorList>
            <person name="Rhee J.H."/>
            <person name="Kim S.Y."/>
            <person name="Chung S.S."/>
            <person name="Kim J.J."/>
            <person name="Moon Y.H."/>
            <person name="Jeong H."/>
            <person name="Choy H.E."/>
        </authorList>
    </citation>
    <scope>NUCLEOTIDE SEQUENCE [LARGE SCALE GENOMIC DNA]</scope>
    <source>
        <strain>CMCP6</strain>
    </source>
</reference>
<comment type="function">
    <text evidence="1">Involved in the de novo purine biosynthesis. Catalyzes the transfer of formate to 5-phospho-ribosyl-glycinamide (GAR), producing 5-phospho-ribosyl-N-formylglycinamide (FGAR). Formate is provided by PurU via hydrolysis of 10-formyl-tetrahydrofolate.</text>
</comment>
<comment type="catalytic activity">
    <reaction evidence="1">
        <text>N(1)-(5-phospho-beta-D-ribosyl)glycinamide + formate + ATP = N(2)-formyl-N(1)-(5-phospho-beta-D-ribosyl)glycinamide + ADP + phosphate + H(+)</text>
        <dbReference type="Rhea" id="RHEA:24829"/>
        <dbReference type="ChEBI" id="CHEBI:15378"/>
        <dbReference type="ChEBI" id="CHEBI:15740"/>
        <dbReference type="ChEBI" id="CHEBI:30616"/>
        <dbReference type="ChEBI" id="CHEBI:43474"/>
        <dbReference type="ChEBI" id="CHEBI:143788"/>
        <dbReference type="ChEBI" id="CHEBI:147286"/>
        <dbReference type="ChEBI" id="CHEBI:456216"/>
        <dbReference type="EC" id="6.3.1.21"/>
    </reaction>
    <physiologicalReaction direction="left-to-right" evidence="1">
        <dbReference type="Rhea" id="RHEA:24830"/>
    </physiologicalReaction>
</comment>
<comment type="pathway">
    <text evidence="1">Purine metabolism; IMP biosynthesis via de novo pathway; N(2)-formyl-N(1)-(5-phospho-D-ribosyl)glycinamide from N(1)-(5-phospho-D-ribosyl)glycinamide (formate route): step 1/1.</text>
</comment>
<comment type="subunit">
    <text evidence="1">Homodimer.</text>
</comment>
<comment type="similarity">
    <text evidence="1">Belongs to the PurK/PurT family.</text>
</comment>
<gene>
    <name evidence="1" type="primary">purT</name>
    <name type="ordered locus">VV1_2378</name>
</gene>
<proteinExistence type="inferred from homology"/>